<organism>
    <name type="scientific">Bacillus cereus (strain B4264)</name>
    <dbReference type="NCBI Taxonomy" id="405532"/>
    <lineage>
        <taxon>Bacteria</taxon>
        <taxon>Bacillati</taxon>
        <taxon>Bacillota</taxon>
        <taxon>Bacilli</taxon>
        <taxon>Bacillales</taxon>
        <taxon>Bacillaceae</taxon>
        <taxon>Bacillus</taxon>
        <taxon>Bacillus cereus group</taxon>
    </lineage>
</organism>
<name>DABA_BACC4</name>
<accession>B7HAF0</accession>
<feature type="chain" id="PRO_0000387242" description="Probable inorganic carbon transporter subunit DabA">
    <location>
        <begin position="1"/>
        <end position="868"/>
    </location>
</feature>
<feature type="binding site" evidence="1">
    <location>
        <position position="392"/>
    </location>
    <ligand>
        <name>Zn(2+)</name>
        <dbReference type="ChEBI" id="CHEBI:29105"/>
    </ligand>
</feature>
<feature type="binding site" evidence="1">
    <location>
        <position position="394"/>
    </location>
    <ligand>
        <name>Zn(2+)</name>
        <dbReference type="ChEBI" id="CHEBI:29105"/>
    </ligand>
</feature>
<feature type="binding site" evidence="1">
    <location>
        <position position="574"/>
    </location>
    <ligand>
        <name>Zn(2+)</name>
        <dbReference type="ChEBI" id="CHEBI:29105"/>
    </ligand>
</feature>
<feature type="binding site" evidence="1">
    <location>
        <position position="589"/>
    </location>
    <ligand>
        <name>Zn(2+)</name>
        <dbReference type="ChEBI" id="CHEBI:29105"/>
    </ligand>
</feature>
<dbReference type="EMBL" id="CP001176">
    <property type="protein sequence ID" value="ACK60322.1"/>
    <property type="molecule type" value="Genomic_DNA"/>
</dbReference>
<dbReference type="RefSeq" id="WP_000026974.1">
    <property type="nucleotide sequence ID" value="NC_011725.1"/>
</dbReference>
<dbReference type="KEGG" id="bcb:BCB4264_A3175"/>
<dbReference type="HOGENOM" id="CLU_009885_0_0_9"/>
<dbReference type="Proteomes" id="UP000007096">
    <property type="component" value="Chromosome"/>
</dbReference>
<dbReference type="GO" id="GO:0005886">
    <property type="term" value="C:plasma membrane"/>
    <property type="evidence" value="ECO:0007669"/>
    <property type="project" value="UniProtKB-SubCell"/>
</dbReference>
<dbReference type="GO" id="GO:0008270">
    <property type="term" value="F:zinc ion binding"/>
    <property type="evidence" value="ECO:0007669"/>
    <property type="project" value="UniProtKB-UniRule"/>
</dbReference>
<dbReference type="HAMAP" id="MF_01871">
    <property type="entry name" value="DabA"/>
    <property type="match status" value="1"/>
</dbReference>
<dbReference type="InterPro" id="IPR018752">
    <property type="entry name" value="DabA"/>
</dbReference>
<dbReference type="PANTHER" id="PTHR38344:SF1">
    <property type="entry name" value="INORGANIC CARBON TRANSPORTER SUBUNIT DABA-RELATED"/>
    <property type="match status" value="1"/>
</dbReference>
<dbReference type="PANTHER" id="PTHR38344">
    <property type="entry name" value="UPF0753 PROTEIN AQ_863"/>
    <property type="match status" value="1"/>
</dbReference>
<dbReference type="Pfam" id="PF10070">
    <property type="entry name" value="DabA"/>
    <property type="match status" value="1"/>
</dbReference>
<keyword id="KW-1003">Cell membrane</keyword>
<keyword id="KW-0472">Membrane</keyword>
<keyword id="KW-0479">Metal-binding</keyword>
<keyword id="KW-0813">Transport</keyword>
<keyword id="KW-0862">Zinc</keyword>
<protein>
    <recommendedName>
        <fullName evidence="1">Probable inorganic carbon transporter subunit DabA</fullName>
    </recommendedName>
</protein>
<proteinExistence type="inferred from homology"/>
<evidence type="ECO:0000255" key="1">
    <source>
        <dbReference type="HAMAP-Rule" id="MF_01871"/>
    </source>
</evidence>
<comment type="function">
    <text evidence="1">Part of an energy-coupled inorganic carbon pump.</text>
</comment>
<comment type="cofactor">
    <cofactor evidence="1">
        <name>Zn(2+)</name>
        <dbReference type="ChEBI" id="CHEBI:29105"/>
    </cofactor>
</comment>
<comment type="subunit">
    <text evidence="1">Forms a complex with DabB.</text>
</comment>
<comment type="subcellular location">
    <subcellularLocation>
        <location evidence="1">Cell membrane</location>
        <topology evidence="1">Peripheral membrane protein</topology>
    </subcellularLocation>
</comment>
<comment type="similarity">
    <text evidence="1">Belongs to the inorganic carbon transporter (TC 9.A.2) DabA family.</text>
</comment>
<sequence>MSIPSILKKDTNIDMQENNINDLVASASRVIAPLWPISTFAAHHPWMGLEKQSFEQVANWLKEARNVDIYPSASMIHSAKVKGEIEESFLQMSLSRWLDSQSFHIPREKAERFCQAALKLEKLPSSLLSSPEVNKLAEEMNYINTASMQASVMQPISSLIESQNSENLSDVLNYHIIKWCKLYLDESGSNWTMPNREKGFYRAWQHLITFDPALSKNERKVLKDWPQDAEVALARALFELGISESNIQSYLEGHLLSLPGWAGMIRWRSQQSIQEQELLIEYLAVRISMELAIVKPYLPLKNQKVEKKVSIVPLIASWIYWGNISTREWLQMPAAEQSELLVFAYRFDENIRKKLWLEAWEQTHAEQLREKIASTQRATNDKKRVLAQLAFCIDVRSEPFRRHLEKLGPFETFGIAGFFGLPIATSELGSNNNHSSLPVILKPKHQIKELTNENELKSYEQRKRVGSSVRSTFKTMKQNVMTSMALPELSGPLLGLQMVTRSFVPRGVGGFIRKLRKTMLQKPATTFSLNHVHDTKGEIPIGFTKEEKVNYVRQALKMVGLTEKFAPLVVMCGHSSQSTNNPYAAALECGACGGAAGGFNARVFATLCNLPEVREALFAEGIKIPEDTIFAAAEHKTTVDELEWIYVPELSETAQEAFDCIESIMPNVSQHANRERLTQLPNFKTKIKNASKEAHRFAEDWSEIRPEWGLARNASFIIGQRELTQDCDLEGRAFLHNYDWKQDESGDILANIIAGPGTVAQWINLQYYASTVAPHYYGSGNKTTQTVTAGLGVMQGNASDLLPGLPWQSVMQSDSETYHSPLRLLIVIQAPSQYIERLLNNDFTFREKVQNGWVRLASVDPKGRWKNW</sequence>
<reference key="1">
    <citation type="submission" date="2008-10" db="EMBL/GenBank/DDBJ databases">
        <title>Genome sequence of Bacillus cereus B4264.</title>
        <authorList>
            <person name="Dodson R.J."/>
            <person name="Durkin A.S."/>
            <person name="Rosovitz M.J."/>
            <person name="Rasko D.A."/>
            <person name="Hoffmaster A."/>
            <person name="Ravel J."/>
            <person name="Sutton G."/>
        </authorList>
    </citation>
    <scope>NUCLEOTIDE SEQUENCE [LARGE SCALE GENOMIC DNA]</scope>
    <source>
        <strain>B4264</strain>
    </source>
</reference>
<gene>
    <name evidence="1" type="primary">dabA</name>
    <name type="ordered locus">BCB4264_A3175</name>
</gene>